<name>SYC_RICRS</name>
<feature type="chain" id="PRO_0000332891" description="Cysteine--tRNA ligase">
    <location>
        <begin position="1"/>
        <end position="459"/>
    </location>
</feature>
<feature type="short sequence motif" description="'HIGH' region">
    <location>
        <begin position="33"/>
        <end position="43"/>
    </location>
</feature>
<feature type="short sequence motif" description="'KMSKS' region">
    <location>
        <begin position="274"/>
        <end position="278"/>
    </location>
</feature>
<feature type="binding site" evidence="1">
    <location>
        <position position="31"/>
    </location>
    <ligand>
        <name>Zn(2+)</name>
        <dbReference type="ChEBI" id="CHEBI:29105"/>
    </ligand>
</feature>
<feature type="binding site" evidence="1">
    <location>
        <position position="216"/>
    </location>
    <ligand>
        <name>Zn(2+)</name>
        <dbReference type="ChEBI" id="CHEBI:29105"/>
    </ligand>
</feature>
<feature type="binding site" evidence="1">
    <location>
        <position position="241"/>
    </location>
    <ligand>
        <name>Zn(2+)</name>
        <dbReference type="ChEBI" id="CHEBI:29105"/>
    </ligand>
</feature>
<feature type="binding site" evidence="1">
    <location>
        <position position="245"/>
    </location>
    <ligand>
        <name>Zn(2+)</name>
        <dbReference type="ChEBI" id="CHEBI:29105"/>
    </ligand>
</feature>
<feature type="binding site" evidence="1">
    <location>
        <position position="277"/>
    </location>
    <ligand>
        <name>ATP</name>
        <dbReference type="ChEBI" id="CHEBI:30616"/>
    </ligand>
</feature>
<proteinExistence type="inferred from homology"/>
<dbReference type="EC" id="6.1.1.16" evidence="1"/>
<dbReference type="EMBL" id="CP000848">
    <property type="protein sequence ID" value="ABV75721.1"/>
    <property type="molecule type" value="Genomic_DNA"/>
</dbReference>
<dbReference type="RefSeq" id="WP_012150336.1">
    <property type="nucleotide sequence ID" value="NZ_CP121767.1"/>
</dbReference>
<dbReference type="SMR" id="A8GQP6"/>
<dbReference type="GeneID" id="79936911"/>
<dbReference type="KEGG" id="rri:A1G_00675"/>
<dbReference type="HOGENOM" id="CLU_013528_0_1_5"/>
<dbReference type="Proteomes" id="UP000006832">
    <property type="component" value="Chromosome"/>
</dbReference>
<dbReference type="GO" id="GO:0005829">
    <property type="term" value="C:cytosol"/>
    <property type="evidence" value="ECO:0007669"/>
    <property type="project" value="TreeGrafter"/>
</dbReference>
<dbReference type="GO" id="GO:0005524">
    <property type="term" value="F:ATP binding"/>
    <property type="evidence" value="ECO:0007669"/>
    <property type="project" value="UniProtKB-UniRule"/>
</dbReference>
<dbReference type="GO" id="GO:0004817">
    <property type="term" value="F:cysteine-tRNA ligase activity"/>
    <property type="evidence" value="ECO:0007669"/>
    <property type="project" value="UniProtKB-UniRule"/>
</dbReference>
<dbReference type="GO" id="GO:0008270">
    <property type="term" value="F:zinc ion binding"/>
    <property type="evidence" value="ECO:0007669"/>
    <property type="project" value="UniProtKB-UniRule"/>
</dbReference>
<dbReference type="GO" id="GO:0006423">
    <property type="term" value="P:cysteinyl-tRNA aminoacylation"/>
    <property type="evidence" value="ECO:0007669"/>
    <property type="project" value="UniProtKB-UniRule"/>
</dbReference>
<dbReference type="CDD" id="cd00672">
    <property type="entry name" value="CysRS_core"/>
    <property type="match status" value="1"/>
</dbReference>
<dbReference type="FunFam" id="3.40.50.620:FF:000068">
    <property type="entry name" value="Cysteine--tRNA ligase"/>
    <property type="match status" value="1"/>
</dbReference>
<dbReference type="Gene3D" id="1.20.120.1910">
    <property type="entry name" value="Cysteine-tRNA ligase, C-terminal anti-codon recognition domain"/>
    <property type="match status" value="1"/>
</dbReference>
<dbReference type="Gene3D" id="3.40.50.620">
    <property type="entry name" value="HUPs"/>
    <property type="match status" value="1"/>
</dbReference>
<dbReference type="HAMAP" id="MF_00041">
    <property type="entry name" value="Cys_tRNA_synth"/>
    <property type="match status" value="1"/>
</dbReference>
<dbReference type="InterPro" id="IPR015803">
    <property type="entry name" value="Cys-tRNA-ligase"/>
</dbReference>
<dbReference type="InterPro" id="IPR015273">
    <property type="entry name" value="Cys-tRNA-synt_Ia_DALR"/>
</dbReference>
<dbReference type="InterPro" id="IPR024909">
    <property type="entry name" value="Cys-tRNA/MSH_ligase"/>
</dbReference>
<dbReference type="InterPro" id="IPR014729">
    <property type="entry name" value="Rossmann-like_a/b/a_fold"/>
</dbReference>
<dbReference type="InterPro" id="IPR032678">
    <property type="entry name" value="tRNA-synt_1_cat_dom"/>
</dbReference>
<dbReference type="InterPro" id="IPR009080">
    <property type="entry name" value="tRNAsynth_Ia_anticodon-bd"/>
</dbReference>
<dbReference type="NCBIfam" id="TIGR00435">
    <property type="entry name" value="cysS"/>
    <property type="match status" value="1"/>
</dbReference>
<dbReference type="PANTHER" id="PTHR10890:SF3">
    <property type="entry name" value="CYSTEINE--TRNA LIGASE, CYTOPLASMIC"/>
    <property type="match status" value="1"/>
</dbReference>
<dbReference type="PANTHER" id="PTHR10890">
    <property type="entry name" value="CYSTEINYL-TRNA SYNTHETASE"/>
    <property type="match status" value="1"/>
</dbReference>
<dbReference type="Pfam" id="PF01406">
    <property type="entry name" value="tRNA-synt_1e"/>
    <property type="match status" value="1"/>
</dbReference>
<dbReference type="PRINTS" id="PR00983">
    <property type="entry name" value="TRNASYNTHCYS"/>
</dbReference>
<dbReference type="SMART" id="SM00840">
    <property type="entry name" value="DALR_2"/>
    <property type="match status" value="1"/>
</dbReference>
<dbReference type="SUPFAM" id="SSF47323">
    <property type="entry name" value="Anticodon-binding domain of a subclass of class I aminoacyl-tRNA synthetases"/>
    <property type="match status" value="1"/>
</dbReference>
<dbReference type="SUPFAM" id="SSF52374">
    <property type="entry name" value="Nucleotidylyl transferase"/>
    <property type="match status" value="1"/>
</dbReference>
<evidence type="ECO:0000255" key="1">
    <source>
        <dbReference type="HAMAP-Rule" id="MF_00041"/>
    </source>
</evidence>
<comment type="catalytic activity">
    <reaction evidence="1">
        <text>tRNA(Cys) + L-cysteine + ATP = L-cysteinyl-tRNA(Cys) + AMP + diphosphate</text>
        <dbReference type="Rhea" id="RHEA:17773"/>
        <dbReference type="Rhea" id="RHEA-COMP:9661"/>
        <dbReference type="Rhea" id="RHEA-COMP:9679"/>
        <dbReference type="ChEBI" id="CHEBI:30616"/>
        <dbReference type="ChEBI" id="CHEBI:33019"/>
        <dbReference type="ChEBI" id="CHEBI:35235"/>
        <dbReference type="ChEBI" id="CHEBI:78442"/>
        <dbReference type="ChEBI" id="CHEBI:78517"/>
        <dbReference type="ChEBI" id="CHEBI:456215"/>
        <dbReference type="EC" id="6.1.1.16"/>
    </reaction>
</comment>
<comment type="cofactor">
    <cofactor evidence="1">
        <name>Zn(2+)</name>
        <dbReference type="ChEBI" id="CHEBI:29105"/>
    </cofactor>
    <text evidence="1">Binds 1 zinc ion per subunit.</text>
</comment>
<comment type="subunit">
    <text evidence="1">Monomer.</text>
</comment>
<comment type="subcellular location">
    <subcellularLocation>
        <location evidence="1">Cytoplasm</location>
    </subcellularLocation>
</comment>
<comment type="similarity">
    <text evidence="1">Belongs to the class-I aminoacyl-tRNA synthetase family.</text>
</comment>
<sequence length="459" mass="53042">MQIQFRLYNTLSRTKEVFNPQDQDNVKMYVCGPTVYYNPHIGNSRSGVVYDLLYRIVIKIFGEKAVKYVRNITDVDDKIIDRAALLGVTIDELTDKVTKEFHKNMAYLGCMLPSIEPKATKHIDVMIAIIERLIAKDHAYIADNHVYFDVLSAPNYTELSNRNLEEMFEGVHVENSKTKKNPQDFVLWKPAKQNESANMNFESPWGLGRPGWHIECSAMSYKYLGENFDIHGGGADLIFPHHTNEIAQSRCAFPSSTYAKYWVHNGFLTVNGEKMSKSLGNFITVRDLMDKQIQGEVVRLFLLSSHYRRPLDYNDKAIEDAKKTLDYWYRAIENINVQKIDLPHDFMQSLLDDMNTPLAVKIINDYAKGVFISKTEEERQLNASAIITCANFIGLMNKSPHEWFNSGVDELYINELVNKRLEAKKHKNWLLADQIRNQLLEEKIILEDQPDGTTIWRKE</sequence>
<gene>
    <name evidence="1" type="primary">cysS</name>
    <name type="ordered locus">A1G_00675</name>
</gene>
<organism>
    <name type="scientific">Rickettsia rickettsii (strain Sheila Smith)</name>
    <dbReference type="NCBI Taxonomy" id="392021"/>
    <lineage>
        <taxon>Bacteria</taxon>
        <taxon>Pseudomonadati</taxon>
        <taxon>Pseudomonadota</taxon>
        <taxon>Alphaproteobacteria</taxon>
        <taxon>Rickettsiales</taxon>
        <taxon>Rickettsiaceae</taxon>
        <taxon>Rickettsieae</taxon>
        <taxon>Rickettsia</taxon>
        <taxon>spotted fever group</taxon>
    </lineage>
</organism>
<protein>
    <recommendedName>
        <fullName evidence="1">Cysteine--tRNA ligase</fullName>
        <ecNumber evidence="1">6.1.1.16</ecNumber>
    </recommendedName>
    <alternativeName>
        <fullName evidence="1">Cysteinyl-tRNA synthetase</fullName>
        <shortName evidence="1">CysRS</shortName>
    </alternativeName>
</protein>
<keyword id="KW-0030">Aminoacyl-tRNA synthetase</keyword>
<keyword id="KW-0067">ATP-binding</keyword>
<keyword id="KW-0963">Cytoplasm</keyword>
<keyword id="KW-0436">Ligase</keyword>
<keyword id="KW-0479">Metal-binding</keyword>
<keyword id="KW-0547">Nucleotide-binding</keyword>
<keyword id="KW-0648">Protein biosynthesis</keyword>
<keyword id="KW-0862">Zinc</keyword>
<accession>A8GQP6</accession>
<reference key="1">
    <citation type="submission" date="2007-09" db="EMBL/GenBank/DDBJ databases">
        <title>Complete genome sequence of Rickettsia rickettsii.</title>
        <authorList>
            <person name="Madan A."/>
            <person name="Fahey J."/>
            <person name="Helton E."/>
            <person name="Ketteman M."/>
            <person name="Madan A."/>
            <person name="Rodrigues S."/>
            <person name="Sanchez A."/>
            <person name="Dasch G."/>
            <person name="Eremeeva M."/>
        </authorList>
    </citation>
    <scope>NUCLEOTIDE SEQUENCE [LARGE SCALE GENOMIC DNA]</scope>
    <source>
        <strain>Sheila Smith</strain>
    </source>
</reference>